<proteinExistence type="inferred from homology"/>
<name>RIMP_CAMJE</name>
<evidence type="ECO:0000255" key="1">
    <source>
        <dbReference type="HAMAP-Rule" id="MF_01077"/>
    </source>
</evidence>
<feature type="chain" id="PRO_0000181856" description="Ribosome maturation factor RimP">
    <location>
        <begin position="1"/>
        <end position="140"/>
    </location>
</feature>
<dbReference type="EMBL" id="AL111168">
    <property type="protein sequence ID" value="CAL34309.1"/>
    <property type="molecule type" value="Genomic_DNA"/>
</dbReference>
<dbReference type="PIR" id="B81431">
    <property type="entry name" value="B81431"/>
</dbReference>
<dbReference type="RefSeq" id="WP_002800873.1">
    <property type="nucleotide sequence ID" value="NZ_SZUC01000005.1"/>
</dbReference>
<dbReference type="RefSeq" id="YP_002343598.1">
    <property type="nucleotide sequence ID" value="NC_002163.1"/>
</dbReference>
<dbReference type="SMR" id="Q9PIY9"/>
<dbReference type="IntAct" id="Q9PIY9">
    <property type="interactions" value="2"/>
</dbReference>
<dbReference type="STRING" id="192222.Cj0138"/>
<dbReference type="PaxDb" id="192222-Cj0138"/>
<dbReference type="EnsemblBacteria" id="CAL34309">
    <property type="protein sequence ID" value="CAL34309"/>
    <property type="gene ID" value="Cj0138"/>
</dbReference>
<dbReference type="GeneID" id="904546"/>
<dbReference type="KEGG" id="cje:Cj0138"/>
<dbReference type="PATRIC" id="fig|192222.6.peg.136"/>
<dbReference type="eggNOG" id="COG0779">
    <property type="taxonomic scope" value="Bacteria"/>
</dbReference>
<dbReference type="HOGENOM" id="CLU_070525_2_2_7"/>
<dbReference type="OrthoDB" id="9805006at2"/>
<dbReference type="PRO" id="PR:Q9PIY9"/>
<dbReference type="Proteomes" id="UP000000799">
    <property type="component" value="Chromosome"/>
</dbReference>
<dbReference type="GO" id="GO:0005829">
    <property type="term" value="C:cytosol"/>
    <property type="evidence" value="ECO:0007669"/>
    <property type="project" value="TreeGrafter"/>
</dbReference>
<dbReference type="GO" id="GO:0000028">
    <property type="term" value="P:ribosomal small subunit assembly"/>
    <property type="evidence" value="ECO:0007669"/>
    <property type="project" value="TreeGrafter"/>
</dbReference>
<dbReference type="GO" id="GO:0006412">
    <property type="term" value="P:translation"/>
    <property type="evidence" value="ECO:0007669"/>
    <property type="project" value="TreeGrafter"/>
</dbReference>
<dbReference type="CDD" id="cd01734">
    <property type="entry name" value="YlxS_C"/>
    <property type="match status" value="1"/>
</dbReference>
<dbReference type="Gene3D" id="2.30.30.180">
    <property type="entry name" value="Ribosome maturation factor RimP, C-terminal domain"/>
    <property type="match status" value="1"/>
</dbReference>
<dbReference type="Gene3D" id="3.30.300.70">
    <property type="entry name" value="RimP-like superfamily, N-terminal"/>
    <property type="match status" value="1"/>
</dbReference>
<dbReference type="HAMAP" id="MF_01077">
    <property type="entry name" value="RimP"/>
    <property type="match status" value="1"/>
</dbReference>
<dbReference type="InterPro" id="IPR003728">
    <property type="entry name" value="Ribosome_maturation_RimP"/>
</dbReference>
<dbReference type="InterPro" id="IPR028998">
    <property type="entry name" value="RimP_C"/>
</dbReference>
<dbReference type="InterPro" id="IPR036847">
    <property type="entry name" value="RimP_C_sf"/>
</dbReference>
<dbReference type="InterPro" id="IPR028989">
    <property type="entry name" value="RimP_N"/>
</dbReference>
<dbReference type="InterPro" id="IPR035956">
    <property type="entry name" value="RimP_N_sf"/>
</dbReference>
<dbReference type="NCBIfam" id="NF011232">
    <property type="entry name" value="PRK14639.1"/>
    <property type="match status" value="1"/>
</dbReference>
<dbReference type="PANTHER" id="PTHR33867">
    <property type="entry name" value="RIBOSOME MATURATION FACTOR RIMP"/>
    <property type="match status" value="1"/>
</dbReference>
<dbReference type="PANTHER" id="PTHR33867:SF1">
    <property type="entry name" value="RIBOSOME MATURATION FACTOR RIMP"/>
    <property type="match status" value="1"/>
</dbReference>
<dbReference type="Pfam" id="PF17384">
    <property type="entry name" value="DUF150_C"/>
    <property type="match status" value="1"/>
</dbReference>
<dbReference type="Pfam" id="PF02576">
    <property type="entry name" value="RimP_N"/>
    <property type="match status" value="1"/>
</dbReference>
<dbReference type="SUPFAM" id="SSF74942">
    <property type="entry name" value="YhbC-like, C-terminal domain"/>
    <property type="match status" value="1"/>
</dbReference>
<dbReference type="SUPFAM" id="SSF75420">
    <property type="entry name" value="YhbC-like, N-terminal domain"/>
    <property type="match status" value="1"/>
</dbReference>
<keyword id="KW-0963">Cytoplasm</keyword>
<keyword id="KW-1185">Reference proteome</keyword>
<keyword id="KW-0690">Ribosome biogenesis</keyword>
<comment type="function">
    <text evidence="1">Required for maturation of 30S ribosomal subunits.</text>
</comment>
<comment type="subcellular location">
    <subcellularLocation>
        <location evidence="1">Cytoplasm</location>
    </subcellularLocation>
</comment>
<comment type="similarity">
    <text evidence="1">Belongs to the RimP family.</text>
</comment>
<protein>
    <recommendedName>
        <fullName evidence="1">Ribosome maturation factor RimP</fullName>
    </recommendedName>
</protein>
<reference key="1">
    <citation type="journal article" date="2000" name="Nature">
        <title>The genome sequence of the food-borne pathogen Campylobacter jejuni reveals hypervariable sequences.</title>
        <authorList>
            <person name="Parkhill J."/>
            <person name="Wren B.W."/>
            <person name="Mungall K.L."/>
            <person name="Ketley J.M."/>
            <person name="Churcher C.M."/>
            <person name="Basham D."/>
            <person name="Chillingworth T."/>
            <person name="Davies R.M."/>
            <person name="Feltwell T."/>
            <person name="Holroyd S."/>
            <person name="Jagels K."/>
            <person name="Karlyshev A.V."/>
            <person name="Moule S."/>
            <person name="Pallen M.J."/>
            <person name="Penn C.W."/>
            <person name="Quail M.A."/>
            <person name="Rajandream M.A."/>
            <person name="Rutherford K.M."/>
            <person name="van Vliet A.H.M."/>
            <person name="Whitehead S."/>
            <person name="Barrell B.G."/>
        </authorList>
    </citation>
    <scope>NUCLEOTIDE SEQUENCE [LARGE SCALE GENOMIC DNA]</scope>
    <source>
        <strain>ATCC 700819 / NCTC 11168</strain>
    </source>
</reference>
<accession>Q9PIY9</accession>
<accession>Q0PBZ9</accession>
<organism>
    <name type="scientific">Campylobacter jejuni subsp. jejuni serotype O:2 (strain ATCC 700819 / NCTC 11168)</name>
    <dbReference type="NCBI Taxonomy" id="192222"/>
    <lineage>
        <taxon>Bacteria</taxon>
        <taxon>Pseudomonadati</taxon>
        <taxon>Campylobacterota</taxon>
        <taxon>Epsilonproteobacteria</taxon>
        <taxon>Campylobacterales</taxon>
        <taxon>Campylobacteraceae</taxon>
        <taxon>Campylobacter</taxon>
    </lineage>
</organism>
<sequence>MNLEALCKEAGLSFYDDELVSENGRKIYRIYVQKEGGVNLDDCARLSEILSPIFDVESPVNGEYFLEVSSPGLERKLSKIEHFAKSIGELVKITTNEKEKFEAKIIAVDDENITLENLENKEKTTINFNDIKKARTFVEW</sequence>
<gene>
    <name evidence="1" type="primary">rimP</name>
    <name type="ordered locus">Cj0138</name>
</gene>